<dbReference type="EMBL" id="AB023032">
    <property type="status" value="NOT_ANNOTATED_CDS"/>
    <property type="molecule type" value="Genomic_DNA"/>
</dbReference>
<dbReference type="EMBL" id="CP002688">
    <property type="protein sequence ID" value="AED94782.1"/>
    <property type="molecule type" value="Genomic_DNA"/>
</dbReference>
<dbReference type="RefSeq" id="NP_001031994.1">
    <property type="nucleotide sequence ID" value="NM_001036917.2"/>
</dbReference>
<dbReference type="PaxDb" id="3702-AT5G42223.1"/>
<dbReference type="EnsemblPlants" id="AT5G42223.1">
    <property type="protein sequence ID" value="AT5G42223.1"/>
    <property type="gene ID" value="AT5G42223"/>
</dbReference>
<dbReference type="GeneID" id="3771400"/>
<dbReference type="Gramene" id="AT5G42223.1">
    <property type="protein sequence ID" value="AT5G42223.1"/>
    <property type="gene ID" value="AT5G42223"/>
</dbReference>
<dbReference type="KEGG" id="ath:AT5G42223"/>
<dbReference type="Araport" id="AT5G42223"/>
<dbReference type="TAIR" id="AT5G42223"/>
<dbReference type="HOGENOM" id="CLU_183259_1_0_1"/>
<dbReference type="InParanoid" id="Q2V322"/>
<dbReference type="OMA" id="KQEDKCY"/>
<dbReference type="OrthoDB" id="1114560at2759"/>
<dbReference type="PhylomeDB" id="Q2V322"/>
<dbReference type="PRO" id="PR:Q2V322"/>
<dbReference type="Proteomes" id="UP000006548">
    <property type="component" value="Chromosome 5"/>
</dbReference>
<dbReference type="ExpressionAtlas" id="Q2V322">
    <property type="expression patterns" value="baseline and differential"/>
</dbReference>
<dbReference type="GO" id="GO:0005576">
    <property type="term" value="C:extracellular region"/>
    <property type="evidence" value="ECO:0007669"/>
    <property type="project" value="UniProtKB-SubCell"/>
</dbReference>
<dbReference type="GO" id="GO:0050832">
    <property type="term" value="P:defense response to fungus"/>
    <property type="evidence" value="ECO:0007669"/>
    <property type="project" value="UniProtKB-KW"/>
</dbReference>
<dbReference type="GO" id="GO:0031640">
    <property type="term" value="P:killing of cells of another organism"/>
    <property type="evidence" value="ECO:0007669"/>
    <property type="project" value="UniProtKB-KW"/>
</dbReference>
<name>DF114_ARATH</name>
<accession>Q2V322</accession>
<feature type="signal peptide" evidence="2">
    <location>
        <begin position="1"/>
        <end position="24"/>
    </location>
</feature>
<feature type="chain" id="PRO_0000379676" description="Putative defensin-like protein 114">
    <location>
        <begin position="25"/>
        <end position="84"/>
    </location>
</feature>
<feature type="disulfide bond" evidence="1">
    <location>
        <begin position="41"/>
        <end position="81"/>
    </location>
</feature>
<feature type="disulfide bond" evidence="1">
    <location>
        <begin position="47"/>
        <end position="69"/>
    </location>
</feature>
<feature type="disulfide bond" evidence="1">
    <location>
        <begin position="54"/>
        <end position="79"/>
    </location>
</feature>
<feature type="disulfide bond" evidence="1">
    <location>
        <begin position="58"/>
        <end position="80"/>
    </location>
</feature>
<sequence length="84" mass="9676">MAITKKCFAAFVLILLFVMPFVYCSELDNTSGFEIKQEDKCYGPEPCKNGYEGCLFFCVRIAYYLYGECTMKPDHQKHCCCVTK</sequence>
<gene>
    <name type="ordered locus">At5g42223</name>
    <name type="ORF">K5J14</name>
</gene>
<keyword id="KW-0929">Antimicrobial</keyword>
<keyword id="KW-1015">Disulfide bond</keyword>
<keyword id="KW-0295">Fungicide</keyword>
<keyword id="KW-0611">Plant defense</keyword>
<keyword id="KW-1185">Reference proteome</keyword>
<keyword id="KW-0964">Secreted</keyword>
<keyword id="KW-0732">Signal</keyword>
<protein>
    <recommendedName>
        <fullName>Putative defensin-like protein 114</fullName>
    </recommendedName>
</protein>
<reference key="1">
    <citation type="journal article" date="2000" name="DNA Res.">
        <title>Structural analysis of Arabidopsis thaliana chromosome 5. X. Sequence features of the regions of 3,076,755 bp covered by sixty P1 and TAC clones.</title>
        <authorList>
            <person name="Sato S."/>
            <person name="Nakamura Y."/>
            <person name="Kaneko T."/>
            <person name="Katoh T."/>
            <person name="Asamizu E."/>
            <person name="Kotani H."/>
            <person name="Tabata S."/>
        </authorList>
    </citation>
    <scope>NUCLEOTIDE SEQUENCE [LARGE SCALE GENOMIC DNA]</scope>
    <source>
        <strain>cv. Columbia</strain>
    </source>
</reference>
<reference key="2">
    <citation type="journal article" date="2017" name="Plant J.">
        <title>Araport11: a complete reannotation of the Arabidopsis thaliana reference genome.</title>
        <authorList>
            <person name="Cheng C.Y."/>
            <person name="Krishnakumar V."/>
            <person name="Chan A.P."/>
            <person name="Thibaud-Nissen F."/>
            <person name="Schobel S."/>
            <person name="Town C.D."/>
        </authorList>
    </citation>
    <scope>GENOME REANNOTATION</scope>
    <source>
        <strain>cv. Columbia</strain>
    </source>
</reference>
<reference key="3">
    <citation type="journal article" date="2005" name="Plant Physiol.">
        <title>Genome organization of more than 300 defensin-like genes in Arabidopsis.</title>
        <authorList>
            <person name="Silverstein K.A.T."/>
            <person name="Graham M.A."/>
            <person name="Paape T.D."/>
            <person name="VandenBosch K.A."/>
        </authorList>
    </citation>
    <scope>GENE FAMILY</scope>
</reference>
<proteinExistence type="inferred from homology"/>
<organism>
    <name type="scientific">Arabidopsis thaliana</name>
    <name type="common">Mouse-ear cress</name>
    <dbReference type="NCBI Taxonomy" id="3702"/>
    <lineage>
        <taxon>Eukaryota</taxon>
        <taxon>Viridiplantae</taxon>
        <taxon>Streptophyta</taxon>
        <taxon>Embryophyta</taxon>
        <taxon>Tracheophyta</taxon>
        <taxon>Spermatophyta</taxon>
        <taxon>Magnoliopsida</taxon>
        <taxon>eudicotyledons</taxon>
        <taxon>Gunneridae</taxon>
        <taxon>Pentapetalae</taxon>
        <taxon>rosids</taxon>
        <taxon>malvids</taxon>
        <taxon>Brassicales</taxon>
        <taxon>Brassicaceae</taxon>
        <taxon>Camelineae</taxon>
        <taxon>Arabidopsis</taxon>
    </lineage>
</organism>
<evidence type="ECO:0000250" key="1"/>
<evidence type="ECO:0000255" key="2"/>
<evidence type="ECO:0000305" key="3"/>
<comment type="subcellular location">
    <subcellularLocation>
        <location evidence="1">Secreted</location>
    </subcellularLocation>
</comment>
<comment type="similarity">
    <text evidence="3">Belongs to the DEFL family.</text>
</comment>